<feature type="chain" id="PRO_0000261909" description="Nucleotide-binding protein Acid345_2028">
    <location>
        <begin position="1"/>
        <end position="164"/>
    </location>
</feature>
<keyword id="KW-0547">Nucleotide-binding</keyword>
<keyword id="KW-1185">Reference proteome</keyword>
<protein>
    <recommendedName>
        <fullName evidence="1">Nucleotide-binding protein Acid345_2028</fullName>
    </recommendedName>
</protein>
<proteinExistence type="inferred from homology"/>
<comment type="function">
    <text evidence="1">Nucleotide-binding protein.</text>
</comment>
<comment type="similarity">
    <text evidence="1">Belongs to the YajQ family.</text>
</comment>
<accession>Q1IQ21</accession>
<gene>
    <name type="ordered locus">Acid345_2028</name>
</gene>
<sequence length="164" mass="18325">MADNSFDIVSKIDLQEVSNAIQQATKEIQTRFDLKDTKSEIKLEKDAIELHSSDEYKLKAVTDILQGKLVKRNVPLKGLTYGTIESAAGATVRQKITMQQGIPGEKAKEIVRVIKDSKKKAQASIQGDTVRVSSKDRDTLQEIIALIKNKDFGIDVQFTNYRSN</sequence>
<dbReference type="EMBL" id="CP000360">
    <property type="protein sequence ID" value="ABF41029.1"/>
    <property type="molecule type" value="Genomic_DNA"/>
</dbReference>
<dbReference type="RefSeq" id="WP_011522830.1">
    <property type="nucleotide sequence ID" value="NC_008009.1"/>
</dbReference>
<dbReference type="SMR" id="Q1IQ21"/>
<dbReference type="STRING" id="204669.Acid345_2028"/>
<dbReference type="EnsemblBacteria" id="ABF41029">
    <property type="protein sequence ID" value="ABF41029"/>
    <property type="gene ID" value="Acid345_2028"/>
</dbReference>
<dbReference type="KEGG" id="aba:Acid345_2028"/>
<dbReference type="eggNOG" id="COG1666">
    <property type="taxonomic scope" value="Bacteria"/>
</dbReference>
<dbReference type="HOGENOM" id="CLU_099839_1_0_0"/>
<dbReference type="OrthoDB" id="9801447at2"/>
<dbReference type="Proteomes" id="UP000002432">
    <property type="component" value="Chromosome"/>
</dbReference>
<dbReference type="GO" id="GO:0005829">
    <property type="term" value="C:cytosol"/>
    <property type="evidence" value="ECO:0007669"/>
    <property type="project" value="TreeGrafter"/>
</dbReference>
<dbReference type="GO" id="GO:0000166">
    <property type="term" value="F:nucleotide binding"/>
    <property type="evidence" value="ECO:0007669"/>
    <property type="project" value="TreeGrafter"/>
</dbReference>
<dbReference type="CDD" id="cd11740">
    <property type="entry name" value="YajQ_like"/>
    <property type="match status" value="1"/>
</dbReference>
<dbReference type="Gene3D" id="3.30.70.860">
    <property type="match status" value="1"/>
</dbReference>
<dbReference type="Gene3D" id="3.30.70.990">
    <property type="entry name" value="YajQ-like, domain 2"/>
    <property type="match status" value="1"/>
</dbReference>
<dbReference type="HAMAP" id="MF_00632">
    <property type="entry name" value="YajQ"/>
    <property type="match status" value="1"/>
</dbReference>
<dbReference type="InterPro" id="IPR007551">
    <property type="entry name" value="DUF520"/>
</dbReference>
<dbReference type="InterPro" id="IPR035571">
    <property type="entry name" value="UPF0234-like_C"/>
</dbReference>
<dbReference type="InterPro" id="IPR035570">
    <property type="entry name" value="UPF0234_N"/>
</dbReference>
<dbReference type="InterPro" id="IPR036183">
    <property type="entry name" value="YajQ-like_sf"/>
</dbReference>
<dbReference type="NCBIfam" id="NF003819">
    <property type="entry name" value="PRK05412.1"/>
    <property type="match status" value="1"/>
</dbReference>
<dbReference type="PANTHER" id="PTHR30476">
    <property type="entry name" value="UPF0234 PROTEIN YAJQ"/>
    <property type="match status" value="1"/>
</dbReference>
<dbReference type="PANTHER" id="PTHR30476:SF0">
    <property type="entry name" value="UPF0234 PROTEIN YAJQ"/>
    <property type="match status" value="1"/>
</dbReference>
<dbReference type="Pfam" id="PF04461">
    <property type="entry name" value="DUF520"/>
    <property type="match status" value="1"/>
</dbReference>
<dbReference type="SUPFAM" id="SSF89963">
    <property type="entry name" value="YajQ-like"/>
    <property type="match status" value="2"/>
</dbReference>
<name>Y2028_KORVE</name>
<reference key="1">
    <citation type="journal article" date="2009" name="Appl. Environ. Microbiol.">
        <title>Three genomes from the phylum Acidobacteria provide insight into the lifestyles of these microorganisms in soils.</title>
        <authorList>
            <person name="Ward N.L."/>
            <person name="Challacombe J.F."/>
            <person name="Janssen P.H."/>
            <person name="Henrissat B."/>
            <person name="Coutinho P.M."/>
            <person name="Wu M."/>
            <person name="Xie G."/>
            <person name="Haft D.H."/>
            <person name="Sait M."/>
            <person name="Badger J."/>
            <person name="Barabote R.D."/>
            <person name="Bradley B."/>
            <person name="Brettin T.S."/>
            <person name="Brinkac L.M."/>
            <person name="Bruce D."/>
            <person name="Creasy T."/>
            <person name="Daugherty S.C."/>
            <person name="Davidsen T.M."/>
            <person name="DeBoy R.T."/>
            <person name="Detter J.C."/>
            <person name="Dodson R.J."/>
            <person name="Durkin A.S."/>
            <person name="Ganapathy A."/>
            <person name="Gwinn-Giglio M."/>
            <person name="Han C.S."/>
            <person name="Khouri H."/>
            <person name="Kiss H."/>
            <person name="Kothari S.P."/>
            <person name="Madupu R."/>
            <person name="Nelson K.E."/>
            <person name="Nelson W.C."/>
            <person name="Paulsen I."/>
            <person name="Penn K."/>
            <person name="Ren Q."/>
            <person name="Rosovitz M.J."/>
            <person name="Selengut J.D."/>
            <person name="Shrivastava S."/>
            <person name="Sullivan S.A."/>
            <person name="Tapia R."/>
            <person name="Thompson L.S."/>
            <person name="Watkins K.L."/>
            <person name="Yang Q."/>
            <person name="Yu C."/>
            <person name="Zafar N."/>
            <person name="Zhou L."/>
            <person name="Kuske C.R."/>
        </authorList>
    </citation>
    <scope>NUCLEOTIDE SEQUENCE [LARGE SCALE GENOMIC DNA]</scope>
    <source>
        <strain>Ellin345</strain>
    </source>
</reference>
<organism>
    <name type="scientific">Koribacter versatilis (strain Ellin345)</name>
    <dbReference type="NCBI Taxonomy" id="204669"/>
    <lineage>
        <taxon>Bacteria</taxon>
        <taxon>Pseudomonadati</taxon>
        <taxon>Acidobacteriota</taxon>
        <taxon>Terriglobia</taxon>
        <taxon>Terriglobales</taxon>
        <taxon>Candidatus Korobacteraceae</taxon>
        <taxon>Candidatus Korobacter</taxon>
    </lineage>
</organism>
<evidence type="ECO:0000255" key="1">
    <source>
        <dbReference type="HAMAP-Rule" id="MF_00632"/>
    </source>
</evidence>